<feature type="peptide" id="PRO_0000421498" description="Extended FMRFamide-3" evidence="3">
    <location>
        <begin position="1"/>
        <end position="9"/>
    </location>
</feature>
<feature type="modified residue" description="Leucine amide" evidence="3">
    <location>
        <position position="9"/>
    </location>
</feature>
<feature type="unsure residue" description="L or I" evidence="3">
    <location>
        <position position="1"/>
    </location>
</feature>
<feature type="unsure residue" description="L or I" evidence="3">
    <location>
        <position position="7"/>
    </location>
</feature>
<feature type="unsure residue" description="L or I" evidence="3">
    <location>
        <position position="9"/>
    </location>
</feature>
<reference evidence="5" key="1">
    <citation type="journal article" date="2012" name="Syst. Biol.">
        <title>Peptidomics-based phylogeny and biogeography of Mantophasmatodea (Hexapoda).</title>
        <authorList>
            <person name="Predel R."/>
            <person name="Neupert S."/>
            <person name="Huetteroth W."/>
            <person name="Kahnt J."/>
            <person name="Waidelich D."/>
            <person name="Roth S."/>
        </authorList>
    </citation>
    <scope>PROTEIN SEQUENCE</scope>
    <scope>AMIDATION AT LEU-9</scope>
    <source>
        <tissue evidence="3">Thoracic perisympathetic organs</tissue>
    </source>
</reference>
<dbReference type="GO" id="GO:0005576">
    <property type="term" value="C:extracellular region"/>
    <property type="evidence" value="ECO:0007669"/>
    <property type="project" value="UniProtKB-SubCell"/>
</dbReference>
<dbReference type="GO" id="GO:0007218">
    <property type="term" value="P:neuropeptide signaling pathway"/>
    <property type="evidence" value="ECO:0007669"/>
    <property type="project" value="UniProtKB-KW"/>
</dbReference>
<organism>
    <name type="scientific">Lobatophasma redelinghuysense</name>
    <name type="common">Gladiator</name>
    <name type="synonym">Heel-walker</name>
    <dbReference type="NCBI Taxonomy" id="253128"/>
    <lineage>
        <taxon>Eukaryota</taxon>
        <taxon>Metazoa</taxon>
        <taxon>Ecdysozoa</taxon>
        <taxon>Arthropoda</taxon>
        <taxon>Hexapoda</taxon>
        <taxon>Insecta</taxon>
        <taxon>Pterygota</taxon>
        <taxon>Neoptera</taxon>
        <taxon>Polyneoptera</taxon>
        <taxon>Mantophasmatodea</taxon>
        <taxon>Austrophasmatidae</taxon>
        <taxon>Lobatophasma</taxon>
    </lineage>
</organism>
<proteinExistence type="evidence at protein level"/>
<protein>
    <recommendedName>
        <fullName evidence="4">Extended FMRFamide-3</fullName>
        <shortName evidence="4">FMRFa-3</shortName>
    </recommendedName>
</protein>
<evidence type="ECO:0000250" key="1">
    <source>
        <dbReference type="UniProtKB" id="P34405"/>
    </source>
</evidence>
<evidence type="ECO:0000255" key="2"/>
<evidence type="ECO:0000269" key="3">
    <source>
    </source>
</evidence>
<evidence type="ECO:0000303" key="4">
    <source>
    </source>
</evidence>
<evidence type="ECO:0000305" key="5"/>
<evidence type="ECO:0000305" key="6">
    <source>
    </source>
</evidence>
<accession>B3A083</accession>
<name>FAR3_LOBRE</name>
<comment type="function">
    <text evidence="1">FMRFamides and FMRFamide-like peptides are neuropeptides.</text>
</comment>
<comment type="subcellular location">
    <subcellularLocation>
        <location evidence="6">Secreted</location>
    </subcellularLocation>
</comment>
<comment type="similarity">
    <text evidence="2">Belongs to the FARP (FMRF amide related peptide) family.</text>
</comment>
<sequence length="9" mass="1047">LPDSSFLRL</sequence>
<keyword id="KW-0027">Amidation</keyword>
<keyword id="KW-0903">Direct protein sequencing</keyword>
<keyword id="KW-0527">Neuropeptide</keyword>
<keyword id="KW-0964">Secreted</keyword>